<evidence type="ECO:0000255" key="1">
    <source>
        <dbReference type="HAMAP-Rule" id="MF_00191"/>
    </source>
</evidence>
<name>ISPH_SHEHH</name>
<keyword id="KW-0004">4Fe-4S</keyword>
<keyword id="KW-0408">Iron</keyword>
<keyword id="KW-0411">Iron-sulfur</keyword>
<keyword id="KW-0414">Isoprene biosynthesis</keyword>
<keyword id="KW-0479">Metal-binding</keyword>
<keyword id="KW-0560">Oxidoreductase</keyword>
<reference key="1">
    <citation type="submission" date="2008-01" db="EMBL/GenBank/DDBJ databases">
        <title>Complete sequence of Shewanella halifaxensis HAW-EB4.</title>
        <authorList>
            <consortium name="US DOE Joint Genome Institute"/>
            <person name="Copeland A."/>
            <person name="Lucas S."/>
            <person name="Lapidus A."/>
            <person name="Glavina del Rio T."/>
            <person name="Dalin E."/>
            <person name="Tice H."/>
            <person name="Bruce D."/>
            <person name="Goodwin L."/>
            <person name="Pitluck S."/>
            <person name="Sims D."/>
            <person name="Brettin T."/>
            <person name="Detter J.C."/>
            <person name="Han C."/>
            <person name="Kuske C.R."/>
            <person name="Schmutz J."/>
            <person name="Larimer F."/>
            <person name="Land M."/>
            <person name="Hauser L."/>
            <person name="Kyrpides N."/>
            <person name="Kim E."/>
            <person name="Zhao J.-S."/>
            <person name="Richardson P."/>
        </authorList>
    </citation>
    <scope>NUCLEOTIDE SEQUENCE [LARGE SCALE GENOMIC DNA]</scope>
    <source>
        <strain>HAW-EB4</strain>
    </source>
</reference>
<comment type="function">
    <text evidence="1">Catalyzes the conversion of 1-hydroxy-2-methyl-2-(E)-butenyl 4-diphosphate (HMBPP) into a mixture of isopentenyl diphosphate (IPP) and dimethylallyl diphosphate (DMAPP). Acts in the terminal step of the DOXP/MEP pathway for isoprenoid precursor biosynthesis.</text>
</comment>
<comment type="catalytic activity">
    <reaction evidence="1">
        <text>isopentenyl diphosphate + 2 oxidized [2Fe-2S]-[ferredoxin] + H2O = (2E)-4-hydroxy-3-methylbut-2-enyl diphosphate + 2 reduced [2Fe-2S]-[ferredoxin] + 2 H(+)</text>
        <dbReference type="Rhea" id="RHEA:24488"/>
        <dbReference type="Rhea" id="RHEA-COMP:10000"/>
        <dbReference type="Rhea" id="RHEA-COMP:10001"/>
        <dbReference type="ChEBI" id="CHEBI:15377"/>
        <dbReference type="ChEBI" id="CHEBI:15378"/>
        <dbReference type="ChEBI" id="CHEBI:33737"/>
        <dbReference type="ChEBI" id="CHEBI:33738"/>
        <dbReference type="ChEBI" id="CHEBI:128753"/>
        <dbReference type="ChEBI" id="CHEBI:128769"/>
        <dbReference type="EC" id="1.17.7.4"/>
    </reaction>
</comment>
<comment type="catalytic activity">
    <reaction evidence="1">
        <text>dimethylallyl diphosphate + 2 oxidized [2Fe-2S]-[ferredoxin] + H2O = (2E)-4-hydroxy-3-methylbut-2-enyl diphosphate + 2 reduced [2Fe-2S]-[ferredoxin] + 2 H(+)</text>
        <dbReference type="Rhea" id="RHEA:24825"/>
        <dbReference type="Rhea" id="RHEA-COMP:10000"/>
        <dbReference type="Rhea" id="RHEA-COMP:10001"/>
        <dbReference type="ChEBI" id="CHEBI:15377"/>
        <dbReference type="ChEBI" id="CHEBI:15378"/>
        <dbReference type="ChEBI" id="CHEBI:33737"/>
        <dbReference type="ChEBI" id="CHEBI:33738"/>
        <dbReference type="ChEBI" id="CHEBI:57623"/>
        <dbReference type="ChEBI" id="CHEBI:128753"/>
        <dbReference type="EC" id="1.17.7.4"/>
    </reaction>
</comment>
<comment type="cofactor">
    <cofactor evidence="1">
        <name>[4Fe-4S] cluster</name>
        <dbReference type="ChEBI" id="CHEBI:49883"/>
    </cofactor>
    <text evidence="1">Binds 1 [4Fe-4S] cluster per subunit.</text>
</comment>
<comment type="pathway">
    <text evidence="1">Isoprenoid biosynthesis; dimethylallyl diphosphate biosynthesis; dimethylallyl diphosphate from (2E)-4-hydroxy-3-methylbutenyl diphosphate: step 1/1.</text>
</comment>
<comment type="pathway">
    <text evidence="1">Isoprenoid biosynthesis; isopentenyl diphosphate biosynthesis via DXP pathway; isopentenyl diphosphate from 1-deoxy-D-xylulose 5-phosphate: step 6/6.</text>
</comment>
<comment type="similarity">
    <text evidence="1">Belongs to the IspH family.</text>
</comment>
<gene>
    <name evidence="1" type="primary">ispH</name>
    <name type="ordered locus">Shal_1134</name>
</gene>
<accession>B0TJB2</accession>
<feature type="chain" id="PRO_1000077528" description="4-hydroxy-3-methylbut-2-enyl diphosphate reductase">
    <location>
        <begin position="1"/>
        <end position="309"/>
    </location>
</feature>
<feature type="active site" description="Proton donor" evidence="1">
    <location>
        <position position="126"/>
    </location>
</feature>
<feature type="binding site" evidence="1">
    <location>
        <position position="12"/>
    </location>
    <ligand>
        <name>[4Fe-4S] cluster</name>
        <dbReference type="ChEBI" id="CHEBI:49883"/>
    </ligand>
</feature>
<feature type="binding site" evidence="1">
    <location>
        <position position="41"/>
    </location>
    <ligand>
        <name>(2E)-4-hydroxy-3-methylbut-2-enyl diphosphate</name>
        <dbReference type="ChEBI" id="CHEBI:128753"/>
    </ligand>
</feature>
<feature type="binding site" evidence="1">
    <location>
        <position position="41"/>
    </location>
    <ligand>
        <name>dimethylallyl diphosphate</name>
        <dbReference type="ChEBI" id="CHEBI:57623"/>
    </ligand>
</feature>
<feature type="binding site" evidence="1">
    <location>
        <position position="41"/>
    </location>
    <ligand>
        <name>isopentenyl diphosphate</name>
        <dbReference type="ChEBI" id="CHEBI:128769"/>
    </ligand>
</feature>
<feature type="binding site" evidence="1">
    <location>
        <position position="74"/>
    </location>
    <ligand>
        <name>(2E)-4-hydroxy-3-methylbut-2-enyl diphosphate</name>
        <dbReference type="ChEBI" id="CHEBI:128753"/>
    </ligand>
</feature>
<feature type="binding site" evidence="1">
    <location>
        <position position="74"/>
    </location>
    <ligand>
        <name>dimethylallyl diphosphate</name>
        <dbReference type="ChEBI" id="CHEBI:57623"/>
    </ligand>
</feature>
<feature type="binding site" evidence="1">
    <location>
        <position position="74"/>
    </location>
    <ligand>
        <name>isopentenyl diphosphate</name>
        <dbReference type="ChEBI" id="CHEBI:128769"/>
    </ligand>
</feature>
<feature type="binding site" evidence="1">
    <location>
        <position position="96"/>
    </location>
    <ligand>
        <name>[4Fe-4S] cluster</name>
        <dbReference type="ChEBI" id="CHEBI:49883"/>
    </ligand>
</feature>
<feature type="binding site" evidence="1">
    <location>
        <position position="124"/>
    </location>
    <ligand>
        <name>(2E)-4-hydroxy-3-methylbut-2-enyl diphosphate</name>
        <dbReference type="ChEBI" id="CHEBI:128753"/>
    </ligand>
</feature>
<feature type="binding site" evidence="1">
    <location>
        <position position="124"/>
    </location>
    <ligand>
        <name>dimethylallyl diphosphate</name>
        <dbReference type="ChEBI" id="CHEBI:57623"/>
    </ligand>
</feature>
<feature type="binding site" evidence="1">
    <location>
        <position position="124"/>
    </location>
    <ligand>
        <name>isopentenyl diphosphate</name>
        <dbReference type="ChEBI" id="CHEBI:128769"/>
    </ligand>
</feature>
<feature type="binding site" evidence="1">
    <location>
        <position position="167"/>
    </location>
    <ligand>
        <name>(2E)-4-hydroxy-3-methylbut-2-enyl diphosphate</name>
        <dbReference type="ChEBI" id="CHEBI:128753"/>
    </ligand>
</feature>
<feature type="binding site" evidence="1">
    <location>
        <position position="197"/>
    </location>
    <ligand>
        <name>[4Fe-4S] cluster</name>
        <dbReference type="ChEBI" id="CHEBI:49883"/>
    </ligand>
</feature>
<feature type="binding site" evidence="1">
    <location>
        <position position="225"/>
    </location>
    <ligand>
        <name>(2E)-4-hydroxy-3-methylbut-2-enyl diphosphate</name>
        <dbReference type="ChEBI" id="CHEBI:128753"/>
    </ligand>
</feature>
<feature type="binding site" evidence="1">
    <location>
        <position position="225"/>
    </location>
    <ligand>
        <name>dimethylallyl diphosphate</name>
        <dbReference type="ChEBI" id="CHEBI:57623"/>
    </ligand>
</feature>
<feature type="binding site" evidence="1">
    <location>
        <position position="225"/>
    </location>
    <ligand>
        <name>isopentenyl diphosphate</name>
        <dbReference type="ChEBI" id="CHEBI:128769"/>
    </ligand>
</feature>
<feature type="binding site" evidence="1">
    <location>
        <position position="226"/>
    </location>
    <ligand>
        <name>(2E)-4-hydroxy-3-methylbut-2-enyl diphosphate</name>
        <dbReference type="ChEBI" id="CHEBI:128753"/>
    </ligand>
</feature>
<feature type="binding site" evidence="1">
    <location>
        <position position="226"/>
    </location>
    <ligand>
        <name>dimethylallyl diphosphate</name>
        <dbReference type="ChEBI" id="CHEBI:57623"/>
    </ligand>
</feature>
<feature type="binding site" evidence="1">
    <location>
        <position position="226"/>
    </location>
    <ligand>
        <name>isopentenyl diphosphate</name>
        <dbReference type="ChEBI" id="CHEBI:128769"/>
    </ligand>
</feature>
<feature type="binding site" evidence="1">
    <location>
        <position position="227"/>
    </location>
    <ligand>
        <name>(2E)-4-hydroxy-3-methylbut-2-enyl diphosphate</name>
        <dbReference type="ChEBI" id="CHEBI:128753"/>
    </ligand>
</feature>
<feature type="binding site" evidence="1">
    <location>
        <position position="227"/>
    </location>
    <ligand>
        <name>dimethylallyl diphosphate</name>
        <dbReference type="ChEBI" id="CHEBI:57623"/>
    </ligand>
</feature>
<feature type="binding site" evidence="1">
    <location>
        <position position="227"/>
    </location>
    <ligand>
        <name>isopentenyl diphosphate</name>
        <dbReference type="ChEBI" id="CHEBI:128769"/>
    </ligand>
</feature>
<feature type="binding site" evidence="1">
    <location>
        <position position="269"/>
    </location>
    <ligand>
        <name>(2E)-4-hydroxy-3-methylbut-2-enyl diphosphate</name>
        <dbReference type="ChEBI" id="CHEBI:128753"/>
    </ligand>
</feature>
<feature type="binding site" evidence="1">
    <location>
        <position position="269"/>
    </location>
    <ligand>
        <name>dimethylallyl diphosphate</name>
        <dbReference type="ChEBI" id="CHEBI:57623"/>
    </ligand>
</feature>
<feature type="binding site" evidence="1">
    <location>
        <position position="269"/>
    </location>
    <ligand>
        <name>isopentenyl diphosphate</name>
        <dbReference type="ChEBI" id="CHEBI:128769"/>
    </ligand>
</feature>
<dbReference type="EC" id="1.17.7.4" evidence="1"/>
<dbReference type="EMBL" id="CP000931">
    <property type="protein sequence ID" value="ABZ75703.1"/>
    <property type="molecule type" value="Genomic_DNA"/>
</dbReference>
<dbReference type="RefSeq" id="WP_012276247.1">
    <property type="nucleotide sequence ID" value="NC_010334.1"/>
</dbReference>
<dbReference type="SMR" id="B0TJB2"/>
<dbReference type="STRING" id="458817.Shal_1134"/>
<dbReference type="KEGG" id="shl:Shal_1134"/>
<dbReference type="eggNOG" id="COG0761">
    <property type="taxonomic scope" value="Bacteria"/>
</dbReference>
<dbReference type="HOGENOM" id="CLU_027486_1_0_6"/>
<dbReference type="OrthoDB" id="9804068at2"/>
<dbReference type="UniPathway" id="UPA00056">
    <property type="reaction ID" value="UER00097"/>
</dbReference>
<dbReference type="UniPathway" id="UPA00059">
    <property type="reaction ID" value="UER00105"/>
</dbReference>
<dbReference type="Proteomes" id="UP000001317">
    <property type="component" value="Chromosome"/>
</dbReference>
<dbReference type="GO" id="GO:0051539">
    <property type="term" value="F:4 iron, 4 sulfur cluster binding"/>
    <property type="evidence" value="ECO:0007669"/>
    <property type="project" value="UniProtKB-UniRule"/>
</dbReference>
<dbReference type="GO" id="GO:0051745">
    <property type="term" value="F:4-hydroxy-3-methylbut-2-enyl diphosphate reductase activity"/>
    <property type="evidence" value="ECO:0007669"/>
    <property type="project" value="UniProtKB-UniRule"/>
</dbReference>
<dbReference type="GO" id="GO:0046872">
    <property type="term" value="F:metal ion binding"/>
    <property type="evidence" value="ECO:0007669"/>
    <property type="project" value="UniProtKB-KW"/>
</dbReference>
<dbReference type="GO" id="GO:0050992">
    <property type="term" value="P:dimethylallyl diphosphate biosynthetic process"/>
    <property type="evidence" value="ECO:0007669"/>
    <property type="project" value="UniProtKB-UniRule"/>
</dbReference>
<dbReference type="GO" id="GO:0019288">
    <property type="term" value="P:isopentenyl diphosphate biosynthetic process, methylerythritol 4-phosphate pathway"/>
    <property type="evidence" value="ECO:0007669"/>
    <property type="project" value="UniProtKB-UniRule"/>
</dbReference>
<dbReference type="GO" id="GO:0016114">
    <property type="term" value="P:terpenoid biosynthetic process"/>
    <property type="evidence" value="ECO:0007669"/>
    <property type="project" value="UniProtKB-UniRule"/>
</dbReference>
<dbReference type="CDD" id="cd13944">
    <property type="entry name" value="lytB_ispH"/>
    <property type="match status" value="1"/>
</dbReference>
<dbReference type="Gene3D" id="3.40.50.11270">
    <property type="match status" value="1"/>
</dbReference>
<dbReference type="Gene3D" id="3.40.1010.20">
    <property type="entry name" value="4-hydroxy-3-methylbut-2-enyl diphosphate reductase, catalytic domain"/>
    <property type="match status" value="2"/>
</dbReference>
<dbReference type="HAMAP" id="MF_00191">
    <property type="entry name" value="IspH"/>
    <property type="match status" value="1"/>
</dbReference>
<dbReference type="InterPro" id="IPR003451">
    <property type="entry name" value="LytB/IspH"/>
</dbReference>
<dbReference type="NCBIfam" id="TIGR00216">
    <property type="entry name" value="ispH_lytB"/>
    <property type="match status" value="1"/>
</dbReference>
<dbReference type="NCBIfam" id="NF002188">
    <property type="entry name" value="PRK01045.1-2"/>
    <property type="match status" value="1"/>
</dbReference>
<dbReference type="NCBIfam" id="NF002190">
    <property type="entry name" value="PRK01045.1-4"/>
    <property type="match status" value="1"/>
</dbReference>
<dbReference type="PANTHER" id="PTHR30426">
    <property type="entry name" value="4-HYDROXY-3-METHYLBUT-2-ENYL DIPHOSPHATE REDUCTASE"/>
    <property type="match status" value="1"/>
</dbReference>
<dbReference type="PANTHER" id="PTHR30426:SF0">
    <property type="entry name" value="4-HYDROXY-3-METHYLBUT-2-ENYL DIPHOSPHATE REDUCTASE"/>
    <property type="match status" value="1"/>
</dbReference>
<dbReference type="Pfam" id="PF02401">
    <property type="entry name" value="LYTB"/>
    <property type="match status" value="1"/>
</dbReference>
<protein>
    <recommendedName>
        <fullName evidence="1">4-hydroxy-3-methylbut-2-enyl diphosphate reductase</fullName>
        <shortName evidence="1">HMBPP reductase</shortName>
        <ecNumber evidence="1">1.17.7.4</ecNumber>
    </recommendedName>
</protein>
<sequence length="309" mass="33698">MNILLANPRGFCAGVDRAISIVERALELFSPPIYVRHEVVHNRYVVQNLKDRGAVFVEELDQVPDESIVIFSAHGVSQAVRHEAKRRGLKVFDATCPLVTKVHLQVARASRKGIECILIGHAGHPEVEGTMGQYDNPAGGVHLVESPEDVANLVVKDPDNLCFVTQTTLSMDDTTDVIASLQSKYPSIEGPRKDDICYATQNRQDAVRNVAEKVELFIVVGSKNSSNSNRLRELAQKKGTTAFLVDNADDVDPSWFNGIQHVAVTAGASAPEVLVKQVVDAIAKMAPSVITEVEGRLEDTVFAVPAELR</sequence>
<organism>
    <name type="scientific">Shewanella halifaxensis (strain HAW-EB4)</name>
    <dbReference type="NCBI Taxonomy" id="458817"/>
    <lineage>
        <taxon>Bacteria</taxon>
        <taxon>Pseudomonadati</taxon>
        <taxon>Pseudomonadota</taxon>
        <taxon>Gammaproteobacteria</taxon>
        <taxon>Alteromonadales</taxon>
        <taxon>Shewanellaceae</taxon>
        <taxon>Shewanella</taxon>
    </lineage>
</organism>
<proteinExistence type="inferred from homology"/>